<accession>O83112</accession>
<feature type="chain" id="PRO_0000202187" description="Uncharacterized protein TP_0073">
    <location>
        <begin position="1"/>
        <end position="513"/>
    </location>
</feature>
<feature type="domain" description="HDOD" evidence="1">
    <location>
        <begin position="254"/>
        <end position="447"/>
    </location>
</feature>
<gene>
    <name type="ordered locus">TP_0073</name>
</gene>
<proteinExistence type="predicted"/>
<keyword id="KW-1185">Reference proteome</keyword>
<evidence type="ECO:0000255" key="1">
    <source>
        <dbReference type="PROSITE-ProRule" id="PRU01177"/>
    </source>
</evidence>
<protein>
    <recommendedName>
        <fullName>Uncharacterized protein TP_0073</fullName>
    </recommendedName>
</protein>
<dbReference type="EMBL" id="AE000520">
    <property type="protein sequence ID" value="AAC65078.1"/>
    <property type="molecule type" value="Genomic_DNA"/>
</dbReference>
<dbReference type="PIR" id="H71368">
    <property type="entry name" value="H71368"/>
</dbReference>
<dbReference type="RefSeq" id="WP_010881522.1">
    <property type="nucleotide sequence ID" value="NC_021490.2"/>
</dbReference>
<dbReference type="SMR" id="O83112"/>
<dbReference type="IntAct" id="O83112">
    <property type="interactions" value="2"/>
</dbReference>
<dbReference type="STRING" id="243276.TP_0073"/>
<dbReference type="EnsemblBacteria" id="AAC65078">
    <property type="protein sequence ID" value="AAC65078"/>
    <property type="gene ID" value="TP_0073"/>
</dbReference>
<dbReference type="KEGG" id="tpa:TP_0073"/>
<dbReference type="KEGG" id="tpw:TPANIC_0073"/>
<dbReference type="eggNOG" id="COG1639">
    <property type="taxonomic scope" value="Bacteria"/>
</dbReference>
<dbReference type="HOGENOM" id="CLU_043273_0_0_12"/>
<dbReference type="OrthoDB" id="355331at2"/>
<dbReference type="Proteomes" id="UP000000811">
    <property type="component" value="Chromosome"/>
</dbReference>
<dbReference type="Gene3D" id="1.10.3210.10">
    <property type="entry name" value="Hypothetical protein af1432"/>
    <property type="match status" value="1"/>
</dbReference>
<dbReference type="InterPro" id="IPR013976">
    <property type="entry name" value="HDOD"/>
</dbReference>
<dbReference type="InterPro" id="IPR052340">
    <property type="entry name" value="RNase_Y/CdgJ"/>
</dbReference>
<dbReference type="PANTHER" id="PTHR33525">
    <property type="match status" value="1"/>
</dbReference>
<dbReference type="PANTHER" id="PTHR33525:SF3">
    <property type="entry name" value="RIBONUCLEASE Y"/>
    <property type="match status" value="1"/>
</dbReference>
<dbReference type="Pfam" id="PF08668">
    <property type="entry name" value="HDOD"/>
    <property type="match status" value="1"/>
</dbReference>
<dbReference type="SUPFAM" id="SSF109604">
    <property type="entry name" value="HD-domain/PDEase-like"/>
    <property type="match status" value="1"/>
</dbReference>
<dbReference type="PROSITE" id="PS51833">
    <property type="entry name" value="HDOD"/>
    <property type="match status" value="1"/>
</dbReference>
<organism>
    <name type="scientific">Treponema pallidum (strain Nichols)</name>
    <dbReference type="NCBI Taxonomy" id="243276"/>
    <lineage>
        <taxon>Bacteria</taxon>
        <taxon>Pseudomonadati</taxon>
        <taxon>Spirochaetota</taxon>
        <taxon>Spirochaetia</taxon>
        <taxon>Spirochaetales</taxon>
        <taxon>Treponemataceae</taxon>
        <taxon>Treponema</taxon>
    </lineage>
</organism>
<reference key="1">
    <citation type="journal article" date="1998" name="Science">
        <title>Complete genome sequence of Treponema pallidum, the syphilis spirochete.</title>
        <authorList>
            <person name="Fraser C.M."/>
            <person name="Norris S.J."/>
            <person name="Weinstock G.M."/>
            <person name="White O."/>
            <person name="Sutton G.G."/>
            <person name="Dodson R.J."/>
            <person name="Gwinn M.L."/>
            <person name="Hickey E.K."/>
            <person name="Clayton R.A."/>
            <person name="Ketchum K.A."/>
            <person name="Sodergren E."/>
            <person name="Hardham J.M."/>
            <person name="McLeod M.P."/>
            <person name="Salzberg S.L."/>
            <person name="Peterson J.D."/>
            <person name="Khalak H.G."/>
            <person name="Richardson D.L."/>
            <person name="Howell J.K."/>
            <person name="Chidambaram M."/>
            <person name="Utterback T.R."/>
            <person name="McDonald L.A."/>
            <person name="Artiach P."/>
            <person name="Bowman C."/>
            <person name="Cotton M.D."/>
            <person name="Fujii C."/>
            <person name="Garland S.A."/>
            <person name="Hatch B."/>
            <person name="Horst K."/>
            <person name="Roberts K.M."/>
            <person name="Sandusky M."/>
            <person name="Weidman J.F."/>
            <person name="Smith H.O."/>
            <person name="Venter J.C."/>
        </authorList>
    </citation>
    <scope>NUCLEOTIDE SEQUENCE [LARGE SCALE GENOMIC DNA]</scope>
    <source>
        <strain>Nichols</strain>
    </source>
</reference>
<sequence length="513" mass="58173">MHFARVVKSIHSVYSLPMCDTQIVVDTEKIRKAIELQLPIAITTYTLPRDMDIYIGQVAKTILDLIGQPHVKDYLTYCISELTTNAKKANTKRIYFREKGLDIFDPQDYKRGMKSFKEESLENINHYLKLQQQEGLYVKVTMQVLSHALVIEVINNCKMTPMEFKRVFDKRVRARRYSGLEEALAHILDNSEGAGLGLVIMMLMLKKLGLEEDVYRLVVEEDRTISRMVVPRNIEIQTQTTKLAASIADRIDDIPQLPSKLLEIQRAIENPDVQLSDIVALISQDVALVTDLLKLVNSARFGMNKRCLDISEAVKRVGLRGLQNLLYSVGAGRVLQSTDDERKQLWNQAYRTGYFALGLAKATGDQALIADSYICGLLHNLGEVVFTSAYPEMLIKLTEIQAERNIPPHVLDTIMSDVGHAEIGAALAQRWNLPEPVINTIRFHHNLPHAPEEYKPLISTVAFANMTIRFLDGETPYEQIPRSLLSFFRIQSEQQLRTTAQTLQSSFEAEQTA</sequence>
<name>Y073_TREPA</name>